<proteinExistence type="evidence at protein level"/>
<comment type="function">
    <text>May play a role in the molecular organization of synapses and neuronal cell signaling. Could be an adapter protein linking ion channel to the subsynaptic cytoskeleton. May induce enrichment of PSD-95/SAP90 at the plasma membrane.</text>
</comment>
<comment type="subunit">
    <text evidence="1">Interacts with DLG1 and DLG4/PSD-95.</text>
</comment>
<comment type="subcellular location">
    <subcellularLocation>
        <location evidence="1">Membrane</location>
        <topology evidence="1">Peripheral membrane protein</topology>
    </subcellularLocation>
</comment>
<comment type="tissue specificity">
    <text>Expressed in brain.</text>
</comment>
<comment type="similarity">
    <text evidence="5">Belongs to the SAPAP family.</text>
</comment>
<reference key="1">
    <citation type="journal article" date="1997" name="J. Biol. Chem.">
        <title>SAPAPs. A family of PSD-95/SAP90-associated proteins localized at postsynaptic density.</title>
        <authorList>
            <person name="Takeuchi M."/>
            <person name="Hata Y."/>
            <person name="Hirao K."/>
            <person name="Toyoda A."/>
            <person name="Irie M."/>
            <person name="Takai Y."/>
        </authorList>
    </citation>
    <scope>NUCLEOTIDE SEQUENCE [MRNA]</scope>
    <source>
        <tissue>Brain</tissue>
    </source>
</reference>
<reference key="2">
    <citation type="journal article" date="2012" name="Nat. Commun.">
        <title>Quantitative maps of protein phosphorylation sites across 14 different rat organs and tissues.</title>
        <authorList>
            <person name="Lundby A."/>
            <person name="Secher A."/>
            <person name="Lage K."/>
            <person name="Nordsborg N.B."/>
            <person name="Dmytriyev A."/>
            <person name="Lundby C."/>
            <person name="Olsen J.V."/>
        </authorList>
    </citation>
    <scope>PHOSPHORYLATION [LARGE SCALE ANALYSIS] AT SER-206; SER-207; SER-377; SER-380; SER-405; SER-415; SER-421; THR-915 AND SER-973</scope>
    <scope>IDENTIFICATION BY MASS SPECTROMETRY [LARGE SCALE ANALYSIS]</scope>
</reference>
<feature type="chain" id="PRO_0000174298" description="Disks large-associated protein 4">
    <location>
        <begin position="1"/>
        <end position="992"/>
    </location>
</feature>
<feature type="region of interest" description="Disordered" evidence="4">
    <location>
        <begin position="1"/>
        <end position="31"/>
    </location>
</feature>
<feature type="region of interest" description="Disordered" evidence="4">
    <location>
        <begin position="154"/>
        <end position="226"/>
    </location>
</feature>
<feature type="region of interest" description="Disordered" evidence="4">
    <location>
        <begin position="342"/>
        <end position="435"/>
    </location>
</feature>
<feature type="region of interest" description="Disordered" evidence="4">
    <location>
        <begin position="527"/>
        <end position="665"/>
    </location>
</feature>
<feature type="region of interest" description="Disordered" evidence="4">
    <location>
        <begin position="677"/>
        <end position="751"/>
    </location>
</feature>
<feature type="region of interest" description="Disordered" evidence="4">
    <location>
        <begin position="763"/>
        <end position="798"/>
    </location>
</feature>
<feature type="region of interest" description="Disordered" evidence="4">
    <location>
        <begin position="915"/>
        <end position="992"/>
    </location>
</feature>
<feature type="compositionally biased region" description="Basic and acidic residues" evidence="4">
    <location>
        <begin position="1"/>
        <end position="20"/>
    </location>
</feature>
<feature type="compositionally biased region" description="Gly residues" evidence="4">
    <location>
        <begin position="162"/>
        <end position="171"/>
    </location>
</feature>
<feature type="compositionally biased region" description="Basic and acidic residues" evidence="4">
    <location>
        <begin position="172"/>
        <end position="194"/>
    </location>
</feature>
<feature type="compositionally biased region" description="Polar residues" evidence="4">
    <location>
        <begin position="199"/>
        <end position="208"/>
    </location>
</feature>
<feature type="compositionally biased region" description="Polar residues" evidence="4">
    <location>
        <begin position="399"/>
        <end position="413"/>
    </location>
</feature>
<feature type="compositionally biased region" description="Low complexity" evidence="4">
    <location>
        <begin position="528"/>
        <end position="554"/>
    </location>
</feature>
<feature type="compositionally biased region" description="Polar residues" evidence="4">
    <location>
        <begin position="576"/>
        <end position="591"/>
    </location>
</feature>
<feature type="compositionally biased region" description="Low complexity" evidence="4">
    <location>
        <begin position="600"/>
        <end position="620"/>
    </location>
</feature>
<feature type="compositionally biased region" description="Basic and acidic residues" evidence="4">
    <location>
        <begin position="915"/>
        <end position="925"/>
    </location>
</feature>
<feature type="compositionally biased region" description="Basic and acidic residues" evidence="4">
    <location>
        <begin position="940"/>
        <end position="958"/>
    </location>
</feature>
<feature type="compositionally biased region" description="Polar residues" evidence="4">
    <location>
        <begin position="969"/>
        <end position="978"/>
    </location>
</feature>
<feature type="modified residue" description="Phosphoserine" evidence="6">
    <location>
        <position position="206"/>
    </location>
</feature>
<feature type="modified residue" description="Phosphoserine" evidence="6">
    <location>
        <position position="207"/>
    </location>
</feature>
<feature type="modified residue" description="Omega-N-methylarginine" evidence="2">
    <location>
        <position position="290"/>
    </location>
</feature>
<feature type="modified residue" description="Phosphoserine" evidence="6">
    <location>
        <position position="377"/>
    </location>
</feature>
<feature type="modified residue" description="Phosphoserine" evidence="6">
    <location>
        <position position="380"/>
    </location>
</feature>
<feature type="modified residue" description="Phosphoserine" evidence="2">
    <location>
        <position position="384"/>
    </location>
</feature>
<feature type="modified residue" description="Phosphoserine" evidence="2">
    <location>
        <position position="388"/>
    </location>
</feature>
<feature type="modified residue" description="Phosphoserine" evidence="6">
    <location>
        <position position="405"/>
    </location>
</feature>
<feature type="modified residue" description="Phosphoserine" evidence="6">
    <location>
        <position position="415"/>
    </location>
</feature>
<feature type="modified residue" description="Phosphoserine" evidence="6">
    <location>
        <position position="421"/>
    </location>
</feature>
<feature type="modified residue" description="Phosphoserine" evidence="2">
    <location>
        <position position="580"/>
    </location>
</feature>
<feature type="modified residue" description="Phosphoserine" evidence="2">
    <location>
        <position position="581"/>
    </location>
</feature>
<feature type="modified residue" description="Phosphoserine" evidence="2">
    <location>
        <position position="609"/>
    </location>
</feature>
<feature type="modified residue" description="Phosphoserine" evidence="2">
    <location>
        <position position="611"/>
    </location>
</feature>
<feature type="modified residue" description="Phosphoserine" evidence="3">
    <location>
        <position position="665"/>
    </location>
</feature>
<feature type="modified residue" description="Phosphoserine" evidence="3">
    <location>
        <position position="744"/>
    </location>
</feature>
<feature type="modified residue" description="Phosphothreonine" evidence="6">
    <location>
        <position position="915"/>
    </location>
</feature>
<feature type="modified residue" description="Phosphoserine" evidence="6">
    <location>
        <position position="973"/>
    </location>
</feature>
<organism>
    <name type="scientific">Rattus norvegicus</name>
    <name type="common">Rat</name>
    <dbReference type="NCBI Taxonomy" id="10116"/>
    <lineage>
        <taxon>Eukaryota</taxon>
        <taxon>Metazoa</taxon>
        <taxon>Chordata</taxon>
        <taxon>Craniata</taxon>
        <taxon>Vertebrata</taxon>
        <taxon>Euteleostomi</taxon>
        <taxon>Mammalia</taxon>
        <taxon>Eutheria</taxon>
        <taxon>Euarchontoglires</taxon>
        <taxon>Glires</taxon>
        <taxon>Rodentia</taxon>
        <taxon>Myomorpha</taxon>
        <taxon>Muroidea</taxon>
        <taxon>Muridae</taxon>
        <taxon>Murinae</taxon>
        <taxon>Rattus</taxon>
    </lineage>
</organism>
<gene>
    <name type="primary">Dlgap4</name>
    <name type="synonym">Dap4</name>
    <name type="synonym">Sapap4</name>
</gene>
<name>DLGP4_RAT</name>
<dbReference type="EMBL" id="U67140">
    <property type="protein sequence ID" value="AAB48590.1"/>
    <property type="molecule type" value="mRNA"/>
</dbReference>
<dbReference type="RefSeq" id="NP_775168.1">
    <property type="nucleotide sequence ID" value="NM_173145.1"/>
</dbReference>
<dbReference type="SMR" id="P97839"/>
<dbReference type="BioGRID" id="251921">
    <property type="interactions" value="1"/>
</dbReference>
<dbReference type="FunCoup" id="P97839">
    <property type="interactions" value="1679"/>
</dbReference>
<dbReference type="IntAct" id="P97839">
    <property type="interactions" value="5"/>
</dbReference>
<dbReference type="MINT" id="P97839"/>
<dbReference type="STRING" id="10116.ENSRNOP00000034166"/>
<dbReference type="CarbonylDB" id="P97839"/>
<dbReference type="GlyGen" id="P97839">
    <property type="glycosylation" value="1 site"/>
</dbReference>
<dbReference type="iPTMnet" id="P97839"/>
<dbReference type="PhosphoSitePlus" id="P97839"/>
<dbReference type="PaxDb" id="10116-ENSRNOP00000034166"/>
<dbReference type="GeneID" id="286930"/>
<dbReference type="KEGG" id="rno:286930"/>
<dbReference type="UCSC" id="RGD:708350">
    <property type="organism name" value="rat"/>
</dbReference>
<dbReference type="AGR" id="RGD:708350"/>
<dbReference type="CTD" id="22839"/>
<dbReference type="RGD" id="708350">
    <property type="gene designation" value="Dlgap4"/>
</dbReference>
<dbReference type="eggNOG" id="KOG3971">
    <property type="taxonomic scope" value="Eukaryota"/>
</dbReference>
<dbReference type="InParanoid" id="P97839"/>
<dbReference type="PhylomeDB" id="P97839"/>
<dbReference type="Reactome" id="R-RNO-6794361">
    <property type="pathway name" value="Neurexins and neuroligins"/>
</dbReference>
<dbReference type="PRO" id="PR:P97839"/>
<dbReference type="Proteomes" id="UP000002494">
    <property type="component" value="Unplaced"/>
</dbReference>
<dbReference type="GO" id="GO:0098981">
    <property type="term" value="C:cholinergic synapse"/>
    <property type="evidence" value="ECO:0000266"/>
    <property type="project" value="RGD"/>
</dbReference>
<dbReference type="GO" id="GO:0030425">
    <property type="term" value="C:dendrite"/>
    <property type="evidence" value="ECO:0000314"/>
    <property type="project" value="RGD"/>
</dbReference>
<dbReference type="GO" id="GO:0098978">
    <property type="term" value="C:glutamatergic synapse"/>
    <property type="evidence" value="ECO:0000266"/>
    <property type="project" value="RGD"/>
</dbReference>
<dbReference type="GO" id="GO:0016020">
    <property type="term" value="C:membrane"/>
    <property type="evidence" value="ECO:0007669"/>
    <property type="project" value="UniProtKB-SubCell"/>
</dbReference>
<dbReference type="GO" id="GO:0031594">
    <property type="term" value="C:neuromuscular junction"/>
    <property type="evidence" value="ECO:0000266"/>
    <property type="project" value="RGD"/>
</dbReference>
<dbReference type="GO" id="GO:0043025">
    <property type="term" value="C:neuronal cell body"/>
    <property type="evidence" value="ECO:0000314"/>
    <property type="project" value="RGD"/>
</dbReference>
<dbReference type="GO" id="GO:0099572">
    <property type="term" value="C:postsynaptic specialization"/>
    <property type="evidence" value="ECO:0000266"/>
    <property type="project" value="RGD"/>
</dbReference>
<dbReference type="GO" id="GO:0045202">
    <property type="term" value="C:synapse"/>
    <property type="evidence" value="ECO:0000266"/>
    <property type="project" value="RGD"/>
</dbReference>
<dbReference type="GO" id="GO:0060090">
    <property type="term" value="F:molecular adaptor activity"/>
    <property type="evidence" value="ECO:0000318"/>
    <property type="project" value="GO_Central"/>
</dbReference>
<dbReference type="GO" id="GO:0019904">
    <property type="term" value="F:protein domain specific binding"/>
    <property type="evidence" value="ECO:0000314"/>
    <property type="project" value="RGD"/>
</dbReference>
<dbReference type="GO" id="GO:0099010">
    <property type="term" value="P:modification of postsynaptic structure"/>
    <property type="evidence" value="ECO:0000266"/>
    <property type="project" value="RGD"/>
</dbReference>
<dbReference type="GO" id="GO:0050804">
    <property type="term" value="P:modulation of chemical synaptic transmission"/>
    <property type="evidence" value="ECO:0000318"/>
    <property type="project" value="GO_Central"/>
</dbReference>
<dbReference type="GO" id="GO:0090128">
    <property type="term" value="P:regulation of synapse maturation"/>
    <property type="evidence" value="ECO:0000266"/>
    <property type="project" value="RGD"/>
</dbReference>
<dbReference type="GO" id="GO:0023052">
    <property type="term" value="P:signaling"/>
    <property type="evidence" value="ECO:0007669"/>
    <property type="project" value="InterPro"/>
</dbReference>
<dbReference type="InterPro" id="IPR005026">
    <property type="entry name" value="SAPAP"/>
</dbReference>
<dbReference type="PANTHER" id="PTHR12353:SF19">
    <property type="entry name" value="DISKS LARGE-ASSOCIATED PROTEIN 4"/>
    <property type="match status" value="1"/>
</dbReference>
<dbReference type="PANTHER" id="PTHR12353">
    <property type="entry name" value="DISKS LARGE-ASSOCIATED PROTEIN DAP SAP90/PSD-95-ASSOCIATED PROTEIN"/>
    <property type="match status" value="1"/>
</dbReference>
<dbReference type="Pfam" id="PF03359">
    <property type="entry name" value="GKAP"/>
    <property type="match status" value="1"/>
</dbReference>
<sequence>MKGLGDSRPRHLSDSLDPPHEPLFAGPDRNPYLLSPTEAFAREARFPGQNTLPGDGLFPLNNQLPPPSSTFPRIHYNSHFEVPEESPFPSHAQATKINRLPANLLDQFEKQLPIHRDGFSTLQFPRGEAKARGESPGRIRHLVHSVQRLFFTKAPSMEGTTGKVGGNGGKKGVLEDGKGRRAKSKERAKAGEPKRRSRSNISGWWSSDDNLDGEGGAFRSGPASGLMTLGRQPERTQPRYFMHAYNTISGHMLKTTKNTTTELTAPPPPPAPPATCPSLGVGTDTNYVKRGSWSTLTLSHAHEVCQKTSATLDKSLLKSKSCHQGLAYHYLQVPGGGGEWSTTLLSPRDMDSTAEGPIPCRRMRSGSYIKAMGDEDSDESGGGSPKPSPKTAARRQSYLRATQQSLGEQSNPRRSLDRLDSVDMPLPSKYPSWEEDYNPISDSLNDSGCISQVFGQASLIPQLFGHDQQVREADLSDQYEAACESACSEAESTAAEALDLSLPSYFRSRSHSYLRAIQAGCSQEEDSVSLQSLSPPPSTGSLSNSRTLPSSSCLVAYKKTPPPVPPRTTSKPFISVTVQSSTESAQDTYLDSQDHKSEVTSQSGLSNSSDSLDSSTRPPSVTRGGITPGPEAPEPPPKHAALKSEHGTLTSSESHSEAVPKRKLSSIGIQVDCIQPVPKEEPSPATKFQSIGVQVEDDWRSSAPSHSMSSRRDTDSDTQDANDSSCKSSERSLPDCTSHPNSISIDAGPRQAPKIAQIKRNLSYGDNSDPALEASSLPPPDPWMETSSSSPAEPAQPGACRRDGYWFLKLLQAETERLEGWCCQMDKETKENNLSEEVLGKVLSAVGSAQLLMSQKFQQFRGICEQNLNPDANPRPTAQDLAGFWDLLQLSIEDISMKFDELYHLKANSWQLVETPEKRKEEKKPPPPVPKKPAKSKAAVSRDKASDAGDKQRQEARKRLLAAKRAASVRQNSATESADSIEIYVPEAQTRL</sequence>
<evidence type="ECO:0000250" key="1"/>
<evidence type="ECO:0000250" key="2">
    <source>
        <dbReference type="UniProtKB" id="B1AZP2"/>
    </source>
</evidence>
<evidence type="ECO:0000250" key="3">
    <source>
        <dbReference type="UniProtKB" id="Q9Y2H0"/>
    </source>
</evidence>
<evidence type="ECO:0000256" key="4">
    <source>
        <dbReference type="SAM" id="MobiDB-lite"/>
    </source>
</evidence>
<evidence type="ECO:0000305" key="5"/>
<evidence type="ECO:0007744" key="6">
    <source>
    </source>
</evidence>
<protein>
    <recommendedName>
        <fullName>Disks large-associated protein 4</fullName>
        <shortName>DAP-4</shortName>
    </recommendedName>
    <alternativeName>
        <fullName>PSD-95/SAP90-binding protein 4</fullName>
    </alternativeName>
    <alternativeName>
        <fullName>SAP90/PSD-95-associated protein 4</fullName>
        <shortName>SAPAP-4</shortName>
    </alternativeName>
</protein>
<accession>P97839</accession>
<keyword id="KW-0472">Membrane</keyword>
<keyword id="KW-0488">Methylation</keyword>
<keyword id="KW-0597">Phosphoprotein</keyword>
<keyword id="KW-1185">Reference proteome</keyword>